<sequence length="203" mass="22799">MNMPMTERIRAGKLFTDMCEGLPEKRLRGKTLMYEFNHSHPSEVEKRESLIKEMFATVGENAWVEPPVYFSYGSNIHIGRNFYANFNLTIVDDYTVTIGDNVLIAPNVTLSVTGHPVHHELRKNGEMYSFPITIGNNVWIGSHVVINPGVTIGDNSVIGAGSIVTKDIPPNVVAAGVPCRVIREINDRDKHYYFKDYKVESSV</sequence>
<comment type="function">
    <text evidence="2 4 5 10">Catalyzes the CoA-dependent transfer of an acetyl group to the 6-O-methyl position of a range of galactosides, glucosides, and lactosides (PubMed:14009486, PubMed:4630409, PubMed:7592843). May assist cellular detoxification by acetylating non-metabolizable pyranosides, thereby preventing their reentry into the cell (Probable).</text>
</comment>
<comment type="catalytic activity">
    <reaction evidence="2 4">
        <text>a beta-D-galactoside + acetyl-CoA = a 6-acetyl-beta-D-galactoside + CoA</text>
        <dbReference type="Rhea" id="RHEA:15713"/>
        <dbReference type="ChEBI" id="CHEBI:28034"/>
        <dbReference type="ChEBI" id="CHEBI:28250"/>
        <dbReference type="ChEBI" id="CHEBI:57287"/>
        <dbReference type="ChEBI" id="CHEBI:57288"/>
        <dbReference type="EC" id="2.3.1.18"/>
    </reaction>
</comment>
<comment type="biophysicochemical properties">
    <kinetics>
        <KM evidence="4">0.18 mM for acetyl-CoA</KM>
        <KM evidence="5">0.104 mM for acetyl-CoA</KM>
        <KM evidence="4">0.77 M for isopropyl beta-D-1-thiogalactopyranoside</KM>
        <KM evidence="5">63.4 mM for p-nitrophenyl-b-D-galactopyranoside</KM>
    </kinetics>
</comment>
<comment type="subunit">
    <text evidence="1 5">Homotrimer.</text>
</comment>
<comment type="subcellular location">
    <subcellularLocation>
        <location evidence="3">Cytoplasm</location>
    </subcellularLocation>
</comment>
<comment type="PTM">
    <text evidence="3">The N-terminus of this protein is heterogeneous because the initiator methionine is only partially cleaved.</text>
</comment>
<comment type="similarity">
    <text evidence="9">Belongs to the transferase hexapeptide repeat family.</text>
</comment>
<accession>P07464</accession>
<accession>P77862</accession>
<accession>Q2MC82</accession>
<reference key="1">
    <citation type="journal article" date="1985" name="Biochimie">
        <title>The amino acid sequence of thiogalactoside transacetylase of Escherichia coli.</title>
        <authorList>
            <person name="Fowler A.V."/>
            <person name="Hediger M.A."/>
            <person name="Musso R.E."/>
            <person name="Zabin I."/>
        </authorList>
    </citation>
    <scope>PROTEIN SEQUENCE</scope>
</reference>
<reference key="2">
    <citation type="journal article" date="1985" name="Proc. Natl. Acad. Sci. U.S.A.">
        <title>DNA sequence of the lactose operon: the lacA gene and the transcriptional termination region.</title>
        <authorList>
            <person name="Hediger M.A."/>
            <person name="Johnson D.F."/>
            <person name="Nierlich D.P."/>
            <person name="Zabin I."/>
        </authorList>
    </citation>
    <scope>NUCLEOTIDE SEQUENCE [GENOMIC DNA]</scope>
</reference>
<reference key="3">
    <citation type="submission" date="1997-01" db="EMBL/GenBank/DDBJ databases">
        <title>Sequence of minutes 4-25 of Escherichia coli.</title>
        <authorList>
            <person name="Chung E."/>
            <person name="Allen E."/>
            <person name="Araujo R."/>
            <person name="Aparicio A.M."/>
            <person name="Davis K."/>
            <person name="Duncan M."/>
            <person name="Federspiel N."/>
            <person name="Hyman R."/>
            <person name="Kalman S."/>
            <person name="Komp C."/>
            <person name="Kurdi O."/>
            <person name="Lew H."/>
            <person name="Lin D."/>
            <person name="Namath A."/>
            <person name="Oefner P."/>
            <person name="Roberts D."/>
            <person name="Schramm S."/>
            <person name="Davis R.W."/>
        </authorList>
    </citation>
    <scope>NUCLEOTIDE SEQUENCE [LARGE SCALE GENOMIC DNA]</scope>
    <source>
        <strain>K12 / MG1655 / ATCC 47076</strain>
    </source>
</reference>
<reference key="4">
    <citation type="journal article" date="1997" name="Science">
        <title>The complete genome sequence of Escherichia coli K-12.</title>
        <authorList>
            <person name="Blattner F.R."/>
            <person name="Plunkett G. III"/>
            <person name="Bloch C.A."/>
            <person name="Perna N.T."/>
            <person name="Burland V."/>
            <person name="Riley M."/>
            <person name="Collado-Vides J."/>
            <person name="Glasner J.D."/>
            <person name="Rode C.K."/>
            <person name="Mayhew G.F."/>
            <person name="Gregor J."/>
            <person name="Davis N.W."/>
            <person name="Kirkpatrick H.A."/>
            <person name="Goeden M.A."/>
            <person name="Rose D.J."/>
            <person name="Mau B."/>
            <person name="Shao Y."/>
        </authorList>
    </citation>
    <scope>NUCLEOTIDE SEQUENCE [LARGE SCALE GENOMIC DNA]</scope>
    <source>
        <strain>K12 / MG1655 / ATCC 47076</strain>
    </source>
</reference>
<reference key="5">
    <citation type="journal article" date="2006" name="Mol. Syst. Biol.">
        <title>Highly accurate genome sequences of Escherichia coli K-12 strains MG1655 and W3110.</title>
        <authorList>
            <person name="Hayashi K."/>
            <person name="Morooka N."/>
            <person name="Yamamoto Y."/>
            <person name="Fujita K."/>
            <person name="Isono K."/>
            <person name="Choi S."/>
            <person name="Ohtsubo E."/>
            <person name="Baba T."/>
            <person name="Wanner B.L."/>
            <person name="Mori H."/>
            <person name="Horiuchi T."/>
        </authorList>
    </citation>
    <scope>NUCLEOTIDE SEQUENCE [LARGE SCALE GENOMIC DNA]</scope>
    <source>
        <strain>K12 / W3110 / ATCC 27325 / DSM 5911</strain>
    </source>
</reference>
<reference key="6">
    <citation type="journal article" date="1980" name="Nature">
        <title>Sequence of the lactose permease gene.</title>
        <authorList>
            <person name="Buechel D.E."/>
            <person name="Gronenborn B."/>
            <person name="Mueller-Hill B."/>
        </authorList>
    </citation>
    <scope>NUCLEOTIDE SEQUENCE [GENOMIC DNA] OF 1-26</scope>
</reference>
<reference key="7">
    <citation type="journal article" date="1962" name="J. Biol. Chem.">
        <title>Thiogalactoside transacetylase.</title>
        <authorList>
            <person name="Zabin I."/>
            <person name="Kepes A."/>
            <person name="Monod J."/>
        </authorList>
    </citation>
    <scope>CATALYTIC ACTIVITY</scope>
</reference>
<reference key="8">
    <citation type="journal article" date="1973" name="Biochemistry">
        <title>Substrate specificity and kinetic studies on thiogalactoside transacetylase.</title>
        <authorList>
            <person name="Musso R.E."/>
            <person name="Zabin I."/>
        </authorList>
    </citation>
    <scope>FUNCTION</scope>
    <scope>CATALYTIC ACTIVITY</scope>
    <scope>BIOPHYSICOCHEMICAL PROPERTIES</scope>
</reference>
<reference key="9">
    <citation type="journal article" date="1995" name="J. Biol. Chem.">
        <title>Structural and mechanistic studies of galactoside acetyltransferase, the Escherichia coli LacA gene product.</title>
        <authorList>
            <person name="Lewendon A."/>
            <person name="Ellis J."/>
            <person name="Shaw W.V."/>
        </authorList>
    </citation>
    <scope>FUNCTION</scope>
    <scope>SUBUNIT</scope>
    <scope>MUTAGENESIS OF HIS-115</scope>
</reference>
<reference key="10">
    <citation type="journal article" date="2002" name="Structure">
        <title>Structure of the lac operon galactoside acetyltransferase.</title>
        <authorList>
            <person name="Wang X.G."/>
            <person name="Olsen L.R."/>
            <person name="Roderick S.L."/>
        </authorList>
    </citation>
    <scope>X-RAY CRYSTALLOGRAPHY (3.2 ANGSTROMS) IN COMPLEX WITH COENZYME A AND SUBSTRATE ANALOG</scope>
    <scope>SUBUNIT</scope>
</reference>
<gene>
    <name type="primary">lacA</name>
    <name type="ordered locus">b0342</name>
    <name type="ordered locus">JW0333</name>
</gene>
<feature type="initiator methionine" description="Removed; Partial" evidence="3">
    <location>
        <position position="1"/>
    </location>
</feature>
<feature type="chain" id="PRO_0000068696" description="Galactoside O-acetyltransferase">
    <location>
        <begin position="2"/>
        <end position="203"/>
    </location>
</feature>
<feature type="active site" description="Proton donor/acceptor" evidence="10">
    <location>
        <position position="115"/>
    </location>
</feature>
<feature type="binding site" evidence="1 12">
    <location>
        <position position="17"/>
    </location>
    <ligand>
        <name>substrate</name>
        <note>ligand shared between dimeric partners</note>
    </ligand>
</feature>
<feature type="binding site" evidence="1 12">
    <location>
        <position position="71"/>
    </location>
    <ligand>
        <name>substrate</name>
        <note>ligand shared between dimeric partners</note>
    </ligand>
</feature>
<feature type="binding site" description="in other chain" evidence="1 11">
    <location>
        <position position="85"/>
    </location>
    <ligand>
        <name>acetyl-CoA</name>
        <dbReference type="ChEBI" id="CHEBI:57288"/>
        <note>ligand shared between dimeric partners</note>
    </ligand>
</feature>
<feature type="binding site" description="in other chain" evidence="1 12">
    <location>
        <position position="85"/>
    </location>
    <ligand>
        <name>substrate</name>
        <note>ligand shared between dimeric partners</note>
    </ligand>
</feature>
<feature type="binding site" evidence="1 12">
    <location>
        <position position="93"/>
    </location>
    <ligand>
        <name>substrate</name>
        <note>ligand shared between dimeric partners</note>
    </ligand>
</feature>
<feature type="binding site" description="in other chain" evidence="1 11">
    <location>
        <position position="142"/>
    </location>
    <ligand>
        <name>acetyl-CoA</name>
        <dbReference type="ChEBI" id="CHEBI:57288"/>
        <note>ligand shared between dimeric partners</note>
    </ligand>
</feature>
<feature type="binding site" description="in other chain" evidence="1 11">
    <location>
        <position position="160"/>
    </location>
    <ligand>
        <name>acetyl-CoA</name>
        <dbReference type="ChEBI" id="CHEBI:57288"/>
        <note>ligand shared between dimeric partners</note>
    </ligand>
</feature>
<feature type="binding site" evidence="1 12">
    <location>
        <begin position="165"/>
        <end position="166"/>
    </location>
    <ligand>
        <name>acetyl-CoA</name>
        <dbReference type="ChEBI" id="CHEBI:57288"/>
        <note>ligand shared between dimeric partners</note>
    </ligand>
</feature>
<feature type="binding site" evidence="1 12">
    <location>
        <position position="180"/>
    </location>
    <ligand>
        <name>acetyl-CoA</name>
        <dbReference type="ChEBI" id="CHEBI:57288"/>
        <note>ligand shared between dimeric partners</note>
    </ligand>
</feature>
<feature type="binding site" description="in other chain" evidence="1 11">
    <location>
        <position position="183"/>
    </location>
    <ligand>
        <name>acetyl-CoA</name>
        <dbReference type="ChEBI" id="CHEBI:57288"/>
        <note>ligand shared between dimeric partners</note>
    </ligand>
</feature>
<feature type="site" description="Transition state stabilizer" evidence="10">
    <location>
        <position position="85"/>
    </location>
</feature>
<feature type="mutagenesis site" description="Results in an 1800-fold decrease in catalytic activity." evidence="5">
    <original>H</original>
    <variation>A</variation>
    <location>
        <position position="115"/>
    </location>
</feature>
<feature type="helix" evidence="13">
    <location>
        <begin position="5"/>
        <end position="11"/>
    </location>
</feature>
<feature type="helix" evidence="13">
    <location>
        <begin position="22"/>
        <end position="37"/>
    </location>
</feature>
<feature type="helix" evidence="13">
    <location>
        <begin position="44"/>
        <end position="54"/>
    </location>
</feature>
<feature type="strand" evidence="13">
    <location>
        <begin position="55"/>
        <end position="57"/>
    </location>
</feature>
<feature type="strand" evidence="13">
    <location>
        <begin position="68"/>
        <end position="71"/>
    </location>
</feature>
<feature type="strand" evidence="13">
    <location>
        <begin position="76"/>
        <end position="78"/>
    </location>
</feature>
<feature type="strand" evidence="13">
    <location>
        <begin position="88"/>
        <end position="91"/>
    </location>
</feature>
<feature type="strand" evidence="13">
    <location>
        <begin position="96"/>
        <end position="98"/>
    </location>
</feature>
<feature type="strand" evidence="13">
    <location>
        <begin position="109"/>
        <end position="114"/>
    </location>
</feature>
<feature type="turn" evidence="13">
    <location>
        <begin position="119"/>
        <end position="121"/>
    </location>
</feature>
<feature type="strand" evidence="13">
    <location>
        <begin position="127"/>
        <end position="129"/>
    </location>
</feature>
<feature type="strand" evidence="13">
    <location>
        <begin position="132"/>
        <end position="134"/>
    </location>
</feature>
<feature type="strand" evidence="13">
    <location>
        <begin position="172"/>
        <end position="175"/>
    </location>
</feature>
<feature type="turn" evidence="13">
    <location>
        <begin position="176"/>
        <end position="179"/>
    </location>
</feature>
<feature type="strand" evidence="13">
    <location>
        <begin position="180"/>
        <end position="184"/>
    </location>
</feature>
<feature type="helix" evidence="13">
    <location>
        <begin position="187"/>
        <end position="189"/>
    </location>
</feature>
<feature type="strand" evidence="14">
    <location>
        <begin position="192"/>
        <end position="194"/>
    </location>
</feature>
<dbReference type="EC" id="2.3.1.18" evidence="2 4"/>
<dbReference type="EMBL" id="J01636">
    <property type="protein sequence ID" value="AAA24055.1"/>
    <property type="molecule type" value="Genomic_DNA"/>
</dbReference>
<dbReference type="EMBL" id="X51872">
    <property type="protein sequence ID" value="CAA36162.1"/>
    <property type="molecule type" value="Genomic_DNA"/>
</dbReference>
<dbReference type="EMBL" id="U73857">
    <property type="protein sequence ID" value="AAB18066.1"/>
    <property type="molecule type" value="Genomic_DNA"/>
</dbReference>
<dbReference type="EMBL" id="U00096">
    <property type="protein sequence ID" value="AAC73445.1"/>
    <property type="molecule type" value="Genomic_DNA"/>
</dbReference>
<dbReference type="EMBL" id="AP009048">
    <property type="protein sequence ID" value="BAE76124.1"/>
    <property type="molecule type" value="Genomic_DNA"/>
</dbReference>
<dbReference type="EMBL" id="V00295">
    <property type="protein sequence ID" value="CAA23572.1"/>
    <property type="molecule type" value="Genomic_DNA"/>
</dbReference>
<dbReference type="PIR" id="A94061">
    <property type="entry name" value="XXECTG"/>
</dbReference>
<dbReference type="RefSeq" id="NP_414876.1">
    <property type="nucleotide sequence ID" value="NC_000913.3"/>
</dbReference>
<dbReference type="RefSeq" id="WP_001335915.1">
    <property type="nucleotide sequence ID" value="NZ_SSZK01000061.1"/>
</dbReference>
<dbReference type="PDB" id="1KQA">
    <property type="method" value="X-ray"/>
    <property type="resolution" value="3.20 A"/>
    <property type="chains" value="A/B/C=1-203"/>
</dbReference>
<dbReference type="PDB" id="1KRR">
    <property type="method" value="X-ray"/>
    <property type="resolution" value="2.50 A"/>
    <property type="chains" value="A/B/C=1-203"/>
</dbReference>
<dbReference type="PDB" id="1KRU">
    <property type="method" value="X-ray"/>
    <property type="resolution" value="2.80 A"/>
    <property type="chains" value="A/B/C=1-203"/>
</dbReference>
<dbReference type="PDB" id="1KRV">
    <property type="method" value="X-ray"/>
    <property type="resolution" value="2.80 A"/>
    <property type="chains" value="A/B/C=1-203"/>
</dbReference>
<dbReference type="PDBsum" id="1KQA"/>
<dbReference type="PDBsum" id="1KRR"/>
<dbReference type="PDBsum" id="1KRU"/>
<dbReference type="PDBsum" id="1KRV"/>
<dbReference type="SMR" id="P07464"/>
<dbReference type="BioGRID" id="4263184">
    <property type="interactions" value="15"/>
</dbReference>
<dbReference type="DIP" id="DIP-10078N"/>
<dbReference type="FunCoup" id="P07464">
    <property type="interactions" value="212"/>
</dbReference>
<dbReference type="IntAct" id="P07464">
    <property type="interactions" value="4"/>
</dbReference>
<dbReference type="STRING" id="511145.b0342"/>
<dbReference type="DrugBank" id="DB02632">
    <property type="generic name" value="4-nitrophenyl-beta-D-galactoside"/>
</dbReference>
<dbReference type="DrugBank" id="DB01992">
    <property type="generic name" value="Coenzyme A"/>
</dbReference>
<dbReference type="DrugBank" id="DB01862">
    <property type="generic name" value="Isopropyl beta-D-thiogalactopyranoside"/>
</dbReference>
<dbReference type="PaxDb" id="511145-b0342"/>
<dbReference type="EnsemblBacteria" id="AAC73445">
    <property type="protein sequence ID" value="AAC73445"/>
    <property type="gene ID" value="b0342"/>
</dbReference>
<dbReference type="GeneID" id="945674"/>
<dbReference type="KEGG" id="ecj:JW0333"/>
<dbReference type="KEGG" id="eco:b0342"/>
<dbReference type="PATRIC" id="fig|511145.12.peg.350"/>
<dbReference type="EchoBASE" id="EB0519"/>
<dbReference type="eggNOG" id="COG0110">
    <property type="taxonomic scope" value="Bacteria"/>
</dbReference>
<dbReference type="HOGENOM" id="CLU_051638_3_0_6"/>
<dbReference type="InParanoid" id="P07464"/>
<dbReference type="OMA" id="KVAQFNI"/>
<dbReference type="OrthoDB" id="9815592at2"/>
<dbReference type="PhylomeDB" id="P07464"/>
<dbReference type="BioCyc" id="EcoCyc:GALACTOACETYLTRAN-MONOMER"/>
<dbReference type="BioCyc" id="MetaCyc:GALACTOACETYLTRAN-MONOMER"/>
<dbReference type="BRENDA" id="2.3.1.18">
    <property type="organism ID" value="2026"/>
</dbReference>
<dbReference type="EvolutionaryTrace" id="P07464"/>
<dbReference type="PRO" id="PR:P07464"/>
<dbReference type="Proteomes" id="UP000000625">
    <property type="component" value="Chromosome"/>
</dbReference>
<dbReference type="GO" id="GO:0005737">
    <property type="term" value="C:cytoplasm"/>
    <property type="evidence" value="ECO:0007669"/>
    <property type="project" value="UniProtKB-SubCell"/>
</dbReference>
<dbReference type="GO" id="GO:0008870">
    <property type="term" value="F:galactoside O-acetyltransferase activity"/>
    <property type="evidence" value="ECO:0000314"/>
    <property type="project" value="EcoCyc"/>
</dbReference>
<dbReference type="GO" id="GO:0042802">
    <property type="term" value="F:identical protein binding"/>
    <property type="evidence" value="ECO:0000353"/>
    <property type="project" value="EcoCyc"/>
</dbReference>
<dbReference type="GO" id="GO:0005989">
    <property type="term" value="P:lactose biosynthetic process"/>
    <property type="evidence" value="ECO:0007669"/>
    <property type="project" value="UniProtKB-KW"/>
</dbReference>
<dbReference type="CDD" id="cd03357">
    <property type="entry name" value="LbH_MAT_GAT"/>
    <property type="match status" value="1"/>
</dbReference>
<dbReference type="FunFam" id="2.160.10.10:FF:000008">
    <property type="entry name" value="Maltose O-acetyltransferase"/>
    <property type="match status" value="1"/>
</dbReference>
<dbReference type="Gene3D" id="2.160.10.10">
    <property type="entry name" value="Hexapeptide repeat proteins"/>
    <property type="match status" value="1"/>
</dbReference>
<dbReference type="InterPro" id="IPR001451">
    <property type="entry name" value="Hexapep"/>
</dbReference>
<dbReference type="InterPro" id="IPR018357">
    <property type="entry name" value="Hexapep_transf_CS"/>
</dbReference>
<dbReference type="InterPro" id="IPR039369">
    <property type="entry name" value="LacA-like"/>
</dbReference>
<dbReference type="InterPro" id="IPR024688">
    <property type="entry name" value="Mac_dom"/>
</dbReference>
<dbReference type="InterPro" id="IPR011004">
    <property type="entry name" value="Trimer_LpxA-like_sf"/>
</dbReference>
<dbReference type="NCBIfam" id="NF007076">
    <property type="entry name" value="PRK09527.1"/>
    <property type="match status" value="1"/>
</dbReference>
<dbReference type="PANTHER" id="PTHR43017:SF1">
    <property type="entry name" value="ACETYLTRANSFERASE YJL218W-RELATED"/>
    <property type="match status" value="1"/>
</dbReference>
<dbReference type="PANTHER" id="PTHR43017">
    <property type="entry name" value="GALACTOSIDE O-ACETYLTRANSFERASE"/>
    <property type="match status" value="1"/>
</dbReference>
<dbReference type="Pfam" id="PF00132">
    <property type="entry name" value="Hexapep"/>
    <property type="match status" value="1"/>
</dbReference>
<dbReference type="Pfam" id="PF12464">
    <property type="entry name" value="Mac"/>
    <property type="match status" value="1"/>
</dbReference>
<dbReference type="SMART" id="SM01266">
    <property type="entry name" value="Mac"/>
    <property type="match status" value="1"/>
</dbReference>
<dbReference type="SUPFAM" id="SSF51161">
    <property type="entry name" value="Trimeric LpxA-like enzymes"/>
    <property type="match status" value="1"/>
</dbReference>
<dbReference type="PROSITE" id="PS00101">
    <property type="entry name" value="HEXAPEP_TRANSFERASES"/>
    <property type="match status" value="1"/>
</dbReference>
<evidence type="ECO:0000269" key="1">
    <source>
    </source>
</evidence>
<evidence type="ECO:0000269" key="2">
    <source>
    </source>
</evidence>
<evidence type="ECO:0000269" key="3">
    <source>
    </source>
</evidence>
<evidence type="ECO:0000269" key="4">
    <source>
    </source>
</evidence>
<evidence type="ECO:0000269" key="5">
    <source>
    </source>
</evidence>
<evidence type="ECO:0000303" key="6">
    <source>
    </source>
</evidence>
<evidence type="ECO:0000303" key="7">
    <source>
    </source>
</evidence>
<evidence type="ECO:0000303" key="8">
    <source>
    </source>
</evidence>
<evidence type="ECO:0000305" key="9"/>
<evidence type="ECO:0000305" key="10">
    <source>
    </source>
</evidence>
<evidence type="ECO:0007744" key="11">
    <source>
        <dbReference type="PDB" id="1KRR"/>
    </source>
</evidence>
<evidence type="ECO:0007744" key="12">
    <source>
        <dbReference type="PDB" id="1KRV"/>
    </source>
</evidence>
<evidence type="ECO:0007829" key="13">
    <source>
        <dbReference type="PDB" id="1KRR"/>
    </source>
</evidence>
<evidence type="ECO:0007829" key="14">
    <source>
        <dbReference type="PDB" id="1KRU"/>
    </source>
</evidence>
<protein>
    <recommendedName>
        <fullName evidence="8">Galactoside O-acetyltransferase</fullName>
        <shortName>GAT</shortName>
        <ecNumber evidence="2 4">2.3.1.18</ecNumber>
    </recommendedName>
    <alternativeName>
        <fullName evidence="7">Acetyl-CoA:galactoside 6-O-acetyltransferase</fullName>
    </alternativeName>
    <alternativeName>
        <fullName>Thiogalactoside acetyltransferase</fullName>
    </alternativeName>
    <alternativeName>
        <fullName evidence="6">Thiogalactoside transacetylase</fullName>
    </alternativeName>
</protein>
<organism>
    <name type="scientific">Escherichia coli (strain K12)</name>
    <dbReference type="NCBI Taxonomy" id="83333"/>
    <lineage>
        <taxon>Bacteria</taxon>
        <taxon>Pseudomonadati</taxon>
        <taxon>Pseudomonadota</taxon>
        <taxon>Gammaproteobacteria</taxon>
        <taxon>Enterobacterales</taxon>
        <taxon>Enterobacteriaceae</taxon>
        <taxon>Escherichia</taxon>
    </lineage>
</organism>
<name>THGA_ECOLI</name>
<proteinExistence type="evidence at protein level"/>
<keyword id="KW-0002">3D-structure</keyword>
<keyword id="KW-0012">Acyltransferase</keyword>
<keyword id="KW-0963">Cytoplasm</keyword>
<keyword id="KW-0903">Direct protein sequencing</keyword>
<keyword id="KW-0422">Lactose biosynthesis</keyword>
<keyword id="KW-1185">Reference proteome</keyword>
<keyword id="KW-0677">Repeat</keyword>
<keyword id="KW-0808">Transferase</keyword>